<evidence type="ECO:0000250" key="1"/>
<evidence type="ECO:0000255" key="2">
    <source>
        <dbReference type="HAMAP-Rule" id="MF_01356"/>
    </source>
</evidence>
<feature type="chain" id="PRO_0000358340" description="NADH-quinone oxidoreductase subunit B">
    <location>
        <begin position="1"/>
        <end position="159"/>
    </location>
</feature>
<feature type="binding site" evidence="2">
    <location>
        <position position="36"/>
    </location>
    <ligand>
        <name>[4Fe-4S] cluster</name>
        <dbReference type="ChEBI" id="CHEBI:49883"/>
    </ligand>
</feature>
<feature type="binding site" evidence="2">
    <location>
        <position position="37"/>
    </location>
    <ligand>
        <name>[4Fe-4S] cluster</name>
        <dbReference type="ChEBI" id="CHEBI:49883"/>
    </ligand>
</feature>
<feature type="binding site" evidence="2">
    <location>
        <position position="102"/>
    </location>
    <ligand>
        <name>[4Fe-4S] cluster</name>
        <dbReference type="ChEBI" id="CHEBI:49883"/>
    </ligand>
</feature>
<feature type="binding site" evidence="2">
    <location>
        <position position="132"/>
    </location>
    <ligand>
        <name>[4Fe-4S] cluster</name>
        <dbReference type="ChEBI" id="CHEBI:49883"/>
    </ligand>
</feature>
<organism>
    <name type="scientific">Acidovorax sp. (strain JS42)</name>
    <dbReference type="NCBI Taxonomy" id="232721"/>
    <lineage>
        <taxon>Bacteria</taxon>
        <taxon>Pseudomonadati</taxon>
        <taxon>Pseudomonadota</taxon>
        <taxon>Betaproteobacteria</taxon>
        <taxon>Burkholderiales</taxon>
        <taxon>Comamonadaceae</taxon>
        <taxon>Acidovorax</taxon>
    </lineage>
</organism>
<gene>
    <name evidence="2" type="primary">nuoB</name>
    <name type="ordered locus">Ajs_0958</name>
</gene>
<comment type="function">
    <text evidence="1">NDH-1 shuttles electrons from NADH, via FMN and iron-sulfur (Fe-S) centers, to quinones in the respiratory chain. Couples the redox reaction to proton translocation (for every two electrons transferred, four hydrogen ions are translocated across the cytoplasmic membrane), and thus conserves the redox energy in a proton gradient (By similarity).</text>
</comment>
<comment type="catalytic activity">
    <reaction evidence="2">
        <text>a quinone + NADH + 5 H(+)(in) = a quinol + NAD(+) + 4 H(+)(out)</text>
        <dbReference type="Rhea" id="RHEA:57888"/>
        <dbReference type="ChEBI" id="CHEBI:15378"/>
        <dbReference type="ChEBI" id="CHEBI:24646"/>
        <dbReference type="ChEBI" id="CHEBI:57540"/>
        <dbReference type="ChEBI" id="CHEBI:57945"/>
        <dbReference type="ChEBI" id="CHEBI:132124"/>
    </reaction>
</comment>
<comment type="cofactor">
    <cofactor evidence="2">
        <name>[4Fe-4S] cluster</name>
        <dbReference type="ChEBI" id="CHEBI:49883"/>
    </cofactor>
    <text evidence="2">Binds 1 [4Fe-4S] cluster.</text>
</comment>
<comment type="subunit">
    <text evidence="2">NDH-1 is composed of 14 different subunits. Subunits NuoB, C, D, E, F, and G constitute the peripheral sector of the complex.</text>
</comment>
<comment type="subcellular location">
    <subcellularLocation>
        <location evidence="2">Cell inner membrane</location>
        <topology evidence="2">Peripheral membrane protein</topology>
        <orientation evidence="2">Cytoplasmic side</orientation>
    </subcellularLocation>
</comment>
<comment type="similarity">
    <text evidence="2">Belongs to the complex I 20 kDa subunit family.</text>
</comment>
<name>NUOB_ACISJ</name>
<protein>
    <recommendedName>
        <fullName evidence="2">NADH-quinone oxidoreductase subunit B</fullName>
        <ecNumber evidence="2">7.1.1.-</ecNumber>
    </recommendedName>
    <alternativeName>
        <fullName evidence="2">NADH dehydrogenase I subunit B</fullName>
    </alternativeName>
    <alternativeName>
        <fullName evidence="2">NDH-1 subunit B</fullName>
    </alternativeName>
</protein>
<reference key="1">
    <citation type="submission" date="2006-12" db="EMBL/GenBank/DDBJ databases">
        <title>Complete sequence of chromosome 1 of Acidovorax sp. JS42.</title>
        <authorList>
            <person name="Copeland A."/>
            <person name="Lucas S."/>
            <person name="Lapidus A."/>
            <person name="Barry K."/>
            <person name="Detter J.C."/>
            <person name="Glavina del Rio T."/>
            <person name="Dalin E."/>
            <person name="Tice H."/>
            <person name="Pitluck S."/>
            <person name="Chertkov O."/>
            <person name="Brettin T."/>
            <person name="Bruce D."/>
            <person name="Han C."/>
            <person name="Tapia R."/>
            <person name="Gilna P."/>
            <person name="Schmutz J."/>
            <person name="Larimer F."/>
            <person name="Land M."/>
            <person name="Hauser L."/>
            <person name="Kyrpides N."/>
            <person name="Kim E."/>
            <person name="Stahl D."/>
            <person name="Richardson P."/>
        </authorList>
    </citation>
    <scope>NUCLEOTIDE SEQUENCE [LARGE SCALE GENOMIC DNA]</scope>
    <source>
        <strain>JS42</strain>
    </source>
</reference>
<sequence length="159" mass="17524">MIEGVMKEGFITTSYDSVVNWAKTGSLWPMTFGLACCAVEMMHAAAARYDLGRFGAEVFRASPRQSDLMIVAGTLCNKMAPALRKVYDQMAEPRWVISMGSCANGGGYYHYSYSVVRGCDRIVPVDVYVPGCPPTAEALIYGIIQLQQKIRRTHTIARA</sequence>
<dbReference type="EC" id="7.1.1.-" evidence="2"/>
<dbReference type="EMBL" id="CP000539">
    <property type="protein sequence ID" value="ABM41198.1"/>
    <property type="molecule type" value="Genomic_DNA"/>
</dbReference>
<dbReference type="SMR" id="A1W4M3"/>
<dbReference type="STRING" id="232721.Ajs_0958"/>
<dbReference type="KEGG" id="ajs:Ajs_0958"/>
<dbReference type="eggNOG" id="COG0377">
    <property type="taxonomic scope" value="Bacteria"/>
</dbReference>
<dbReference type="HOGENOM" id="CLU_055737_7_3_4"/>
<dbReference type="Proteomes" id="UP000000645">
    <property type="component" value="Chromosome"/>
</dbReference>
<dbReference type="GO" id="GO:0005886">
    <property type="term" value="C:plasma membrane"/>
    <property type="evidence" value="ECO:0007669"/>
    <property type="project" value="UniProtKB-SubCell"/>
</dbReference>
<dbReference type="GO" id="GO:0045271">
    <property type="term" value="C:respiratory chain complex I"/>
    <property type="evidence" value="ECO:0007669"/>
    <property type="project" value="TreeGrafter"/>
</dbReference>
<dbReference type="GO" id="GO:0051539">
    <property type="term" value="F:4 iron, 4 sulfur cluster binding"/>
    <property type="evidence" value="ECO:0007669"/>
    <property type="project" value="UniProtKB-KW"/>
</dbReference>
<dbReference type="GO" id="GO:0005506">
    <property type="term" value="F:iron ion binding"/>
    <property type="evidence" value="ECO:0007669"/>
    <property type="project" value="UniProtKB-UniRule"/>
</dbReference>
<dbReference type="GO" id="GO:0008137">
    <property type="term" value="F:NADH dehydrogenase (ubiquinone) activity"/>
    <property type="evidence" value="ECO:0007669"/>
    <property type="project" value="InterPro"/>
</dbReference>
<dbReference type="GO" id="GO:0050136">
    <property type="term" value="F:NADH:ubiquinone reductase (non-electrogenic) activity"/>
    <property type="evidence" value="ECO:0007669"/>
    <property type="project" value="UniProtKB-UniRule"/>
</dbReference>
<dbReference type="GO" id="GO:0048038">
    <property type="term" value="F:quinone binding"/>
    <property type="evidence" value="ECO:0007669"/>
    <property type="project" value="UniProtKB-KW"/>
</dbReference>
<dbReference type="GO" id="GO:0009060">
    <property type="term" value="P:aerobic respiration"/>
    <property type="evidence" value="ECO:0007669"/>
    <property type="project" value="TreeGrafter"/>
</dbReference>
<dbReference type="GO" id="GO:0015990">
    <property type="term" value="P:electron transport coupled proton transport"/>
    <property type="evidence" value="ECO:0007669"/>
    <property type="project" value="TreeGrafter"/>
</dbReference>
<dbReference type="FunFam" id="3.40.50.12280:FF:000001">
    <property type="entry name" value="NADH-quinone oxidoreductase subunit B 2"/>
    <property type="match status" value="1"/>
</dbReference>
<dbReference type="Gene3D" id="3.40.50.12280">
    <property type="match status" value="1"/>
</dbReference>
<dbReference type="HAMAP" id="MF_01356">
    <property type="entry name" value="NDH1_NuoB"/>
    <property type="match status" value="1"/>
</dbReference>
<dbReference type="InterPro" id="IPR006137">
    <property type="entry name" value="NADH_UbQ_OxRdtase-like_20kDa"/>
</dbReference>
<dbReference type="InterPro" id="IPR006138">
    <property type="entry name" value="NADH_UQ_OxRdtase_20Kd_su"/>
</dbReference>
<dbReference type="NCBIfam" id="TIGR01957">
    <property type="entry name" value="nuoB_fam"/>
    <property type="match status" value="1"/>
</dbReference>
<dbReference type="NCBIfam" id="NF005012">
    <property type="entry name" value="PRK06411.1"/>
    <property type="match status" value="1"/>
</dbReference>
<dbReference type="PANTHER" id="PTHR11995">
    <property type="entry name" value="NADH DEHYDROGENASE"/>
    <property type="match status" value="1"/>
</dbReference>
<dbReference type="PANTHER" id="PTHR11995:SF14">
    <property type="entry name" value="NADH DEHYDROGENASE [UBIQUINONE] IRON-SULFUR PROTEIN 7, MITOCHONDRIAL"/>
    <property type="match status" value="1"/>
</dbReference>
<dbReference type="Pfam" id="PF01058">
    <property type="entry name" value="Oxidored_q6"/>
    <property type="match status" value="1"/>
</dbReference>
<dbReference type="SUPFAM" id="SSF56770">
    <property type="entry name" value="HydA/Nqo6-like"/>
    <property type="match status" value="1"/>
</dbReference>
<dbReference type="PROSITE" id="PS01150">
    <property type="entry name" value="COMPLEX1_20K"/>
    <property type="match status" value="1"/>
</dbReference>
<proteinExistence type="inferred from homology"/>
<accession>A1W4M3</accession>
<keyword id="KW-0004">4Fe-4S</keyword>
<keyword id="KW-0997">Cell inner membrane</keyword>
<keyword id="KW-1003">Cell membrane</keyword>
<keyword id="KW-0408">Iron</keyword>
<keyword id="KW-0411">Iron-sulfur</keyword>
<keyword id="KW-0472">Membrane</keyword>
<keyword id="KW-0479">Metal-binding</keyword>
<keyword id="KW-0520">NAD</keyword>
<keyword id="KW-0874">Quinone</keyword>
<keyword id="KW-1278">Translocase</keyword>
<keyword id="KW-0813">Transport</keyword>
<keyword id="KW-0830">Ubiquinone</keyword>